<keyword id="KW-0021">Allosteric enzyme</keyword>
<keyword id="KW-0119">Carbohydrate metabolism</keyword>
<keyword id="KW-0378">Hydrolase</keyword>
<sequence length="266" mass="29632">MRLIPLSTAEQVGKWAARHIVNRINAFKPTADRPFVLGLPTGGTPLTAYKALVEMHKAGEVSFKHVVTFNMDEYVGLPKEHPESYHSFMHRNFFDHVDIPAENINLLNGNAPDIDAECRQYEEKIRSYGKIHLFMGGVGNDGHIAFNEPASSLASRTRIKTLTHDTRVANSRFFDGDVNQVPKYALTVGVGTLLDAEEVMILVLGHQKAQALQAAVEGNVNHMWTISCLQLHPKAVVVCDEPSTMELKVKTLKYFNELEAENIKGL</sequence>
<evidence type="ECO:0000255" key="1">
    <source>
        <dbReference type="HAMAP-Rule" id="MF_01241"/>
    </source>
</evidence>
<protein>
    <recommendedName>
        <fullName evidence="1">Glucosamine-6-phosphate deaminase</fullName>
        <ecNumber evidence="1">3.5.99.6</ecNumber>
    </recommendedName>
    <alternativeName>
        <fullName evidence="1">GlcN6P deaminase</fullName>
        <shortName evidence="1">GNPDA</shortName>
    </alternativeName>
    <alternativeName>
        <fullName evidence="1">Glucosamine-6-phosphate isomerase</fullName>
    </alternativeName>
</protein>
<organism>
    <name type="scientific">Salmonella enteritidis PT4 (strain P125109)</name>
    <dbReference type="NCBI Taxonomy" id="550537"/>
    <lineage>
        <taxon>Bacteria</taxon>
        <taxon>Pseudomonadati</taxon>
        <taxon>Pseudomonadota</taxon>
        <taxon>Gammaproteobacteria</taxon>
        <taxon>Enterobacterales</taxon>
        <taxon>Enterobacteriaceae</taxon>
        <taxon>Salmonella</taxon>
    </lineage>
</organism>
<accession>B5QWC8</accession>
<dbReference type="EC" id="3.5.99.6" evidence="1"/>
<dbReference type="EMBL" id="AM933172">
    <property type="protein sequence ID" value="CAR32234.1"/>
    <property type="molecule type" value="Genomic_DNA"/>
</dbReference>
<dbReference type="RefSeq" id="WP_001237059.1">
    <property type="nucleotide sequence ID" value="NC_011294.1"/>
</dbReference>
<dbReference type="SMR" id="B5QWC8"/>
<dbReference type="KEGG" id="set:SEN0648"/>
<dbReference type="HOGENOM" id="CLU_049611_0_1_6"/>
<dbReference type="UniPathway" id="UPA00629">
    <property type="reaction ID" value="UER00684"/>
</dbReference>
<dbReference type="Proteomes" id="UP000000613">
    <property type="component" value="Chromosome"/>
</dbReference>
<dbReference type="GO" id="GO:0005737">
    <property type="term" value="C:cytoplasm"/>
    <property type="evidence" value="ECO:0007669"/>
    <property type="project" value="TreeGrafter"/>
</dbReference>
<dbReference type="GO" id="GO:0004342">
    <property type="term" value="F:glucosamine-6-phosphate deaminase activity"/>
    <property type="evidence" value="ECO:0007669"/>
    <property type="project" value="UniProtKB-UniRule"/>
</dbReference>
<dbReference type="GO" id="GO:0042802">
    <property type="term" value="F:identical protein binding"/>
    <property type="evidence" value="ECO:0007669"/>
    <property type="project" value="TreeGrafter"/>
</dbReference>
<dbReference type="GO" id="GO:0005975">
    <property type="term" value="P:carbohydrate metabolic process"/>
    <property type="evidence" value="ECO:0007669"/>
    <property type="project" value="InterPro"/>
</dbReference>
<dbReference type="GO" id="GO:0006043">
    <property type="term" value="P:glucosamine catabolic process"/>
    <property type="evidence" value="ECO:0007669"/>
    <property type="project" value="TreeGrafter"/>
</dbReference>
<dbReference type="GO" id="GO:0006046">
    <property type="term" value="P:N-acetylglucosamine catabolic process"/>
    <property type="evidence" value="ECO:0007669"/>
    <property type="project" value="TreeGrafter"/>
</dbReference>
<dbReference type="GO" id="GO:0019262">
    <property type="term" value="P:N-acetylneuraminate catabolic process"/>
    <property type="evidence" value="ECO:0007669"/>
    <property type="project" value="UniProtKB-UniRule"/>
</dbReference>
<dbReference type="CDD" id="cd01399">
    <property type="entry name" value="GlcN6P_deaminase"/>
    <property type="match status" value="1"/>
</dbReference>
<dbReference type="FunFam" id="3.40.50.1360:FF:000002">
    <property type="entry name" value="Glucosamine-6-phosphate deaminase"/>
    <property type="match status" value="1"/>
</dbReference>
<dbReference type="Gene3D" id="3.40.50.1360">
    <property type="match status" value="1"/>
</dbReference>
<dbReference type="HAMAP" id="MF_01241">
    <property type="entry name" value="GlcN6P_deamin"/>
    <property type="match status" value="1"/>
</dbReference>
<dbReference type="InterPro" id="IPR006148">
    <property type="entry name" value="Glc/Gal-6P_isomerase"/>
</dbReference>
<dbReference type="InterPro" id="IPR004547">
    <property type="entry name" value="Glucosamine6P_isomerase"/>
</dbReference>
<dbReference type="InterPro" id="IPR018321">
    <property type="entry name" value="Glucosamine6P_isomerase_CS"/>
</dbReference>
<dbReference type="InterPro" id="IPR037171">
    <property type="entry name" value="NagB/RpiA_transferase-like"/>
</dbReference>
<dbReference type="NCBIfam" id="TIGR00502">
    <property type="entry name" value="nagB"/>
    <property type="match status" value="1"/>
</dbReference>
<dbReference type="NCBIfam" id="NF001685">
    <property type="entry name" value="PRK00443.1-5"/>
    <property type="match status" value="1"/>
</dbReference>
<dbReference type="PANTHER" id="PTHR11280">
    <property type="entry name" value="GLUCOSAMINE-6-PHOSPHATE ISOMERASE"/>
    <property type="match status" value="1"/>
</dbReference>
<dbReference type="PANTHER" id="PTHR11280:SF5">
    <property type="entry name" value="GLUCOSAMINE-6-PHOSPHATE ISOMERASE"/>
    <property type="match status" value="1"/>
</dbReference>
<dbReference type="Pfam" id="PF01182">
    <property type="entry name" value="Glucosamine_iso"/>
    <property type="match status" value="1"/>
</dbReference>
<dbReference type="SUPFAM" id="SSF100950">
    <property type="entry name" value="NagB/RpiA/CoA transferase-like"/>
    <property type="match status" value="1"/>
</dbReference>
<dbReference type="PROSITE" id="PS01161">
    <property type="entry name" value="GLC_GALNAC_ISOMERASE"/>
    <property type="match status" value="1"/>
</dbReference>
<name>NAGB_SALEP</name>
<comment type="function">
    <text evidence="1">Catalyzes the reversible isomerization-deamination of glucosamine 6-phosphate (GlcN6P) to form fructose 6-phosphate (Fru6P) and ammonium ion.</text>
</comment>
<comment type="catalytic activity">
    <reaction evidence="1">
        <text>alpha-D-glucosamine 6-phosphate + H2O = beta-D-fructose 6-phosphate + NH4(+)</text>
        <dbReference type="Rhea" id="RHEA:12172"/>
        <dbReference type="ChEBI" id="CHEBI:15377"/>
        <dbReference type="ChEBI" id="CHEBI:28938"/>
        <dbReference type="ChEBI" id="CHEBI:57634"/>
        <dbReference type="ChEBI" id="CHEBI:75989"/>
        <dbReference type="EC" id="3.5.99.6"/>
    </reaction>
</comment>
<comment type="activity regulation">
    <text evidence="1">Allosterically activated by N-acetylglucosamine 6-phosphate (GlcNAc6P).</text>
</comment>
<comment type="pathway">
    <text evidence="1">Amino-sugar metabolism; N-acetylneuraminate degradation; D-fructose 6-phosphate from N-acetylneuraminate: step 5/5.</text>
</comment>
<comment type="subunit">
    <text evidence="1">Homohexamer.</text>
</comment>
<comment type="similarity">
    <text evidence="1">Belongs to the glucosamine/galactosamine-6-phosphate isomerase family. NagB subfamily.</text>
</comment>
<feature type="chain" id="PRO_1000139786" description="Glucosamine-6-phosphate deaminase">
    <location>
        <begin position="1"/>
        <end position="266"/>
    </location>
</feature>
<feature type="active site" description="Proton acceptor; for enolization step" evidence="1">
    <location>
        <position position="72"/>
    </location>
</feature>
<feature type="active site" description="For ring-opening step" evidence="1">
    <location>
        <position position="141"/>
    </location>
</feature>
<feature type="active site" description="Proton acceptor; for ring-opening step" evidence="1">
    <location>
        <position position="143"/>
    </location>
</feature>
<feature type="active site" description="For ring-opening step" evidence="1">
    <location>
        <position position="148"/>
    </location>
</feature>
<feature type="site" description="Part of the allosteric site" evidence="1">
    <location>
        <position position="151"/>
    </location>
</feature>
<feature type="site" description="Part of the allosteric site" evidence="1">
    <location>
        <position position="158"/>
    </location>
</feature>
<feature type="site" description="Part of the allosteric site" evidence="1">
    <location>
        <position position="160"/>
    </location>
</feature>
<feature type="site" description="Part of the allosteric site" evidence="1">
    <location>
        <position position="161"/>
    </location>
</feature>
<feature type="site" description="Part of the allosteric site" evidence="1">
    <location>
        <position position="254"/>
    </location>
</feature>
<proteinExistence type="inferred from homology"/>
<reference key="1">
    <citation type="journal article" date="2008" name="Genome Res.">
        <title>Comparative genome analysis of Salmonella enteritidis PT4 and Salmonella gallinarum 287/91 provides insights into evolutionary and host adaptation pathways.</title>
        <authorList>
            <person name="Thomson N.R."/>
            <person name="Clayton D.J."/>
            <person name="Windhorst D."/>
            <person name="Vernikos G."/>
            <person name="Davidson S."/>
            <person name="Churcher C."/>
            <person name="Quail M.A."/>
            <person name="Stevens M."/>
            <person name="Jones M.A."/>
            <person name="Watson M."/>
            <person name="Barron A."/>
            <person name="Layton A."/>
            <person name="Pickard D."/>
            <person name="Kingsley R.A."/>
            <person name="Bignell A."/>
            <person name="Clark L."/>
            <person name="Harris B."/>
            <person name="Ormond D."/>
            <person name="Abdellah Z."/>
            <person name="Brooks K."/>
            <person name="Cherevach I."/>
            <person name="Chillingworth T."/>
            <person name="Woodward J."/>
            <person name="Norberczak H."/>
            <person name="Lord A."/>
            <person name="Arrowsmith C."/>
            <person name="Jagels K."/>
            <person name="Moule S."/>
            <person name="Mungall K."/>
            <person name="Saunders M."/>
            <person name="Whitehead S."/>
            <person name="Chabalgoity J.A."/>
            <person name="Maskell D."/>
            <person name="Humphreys T."/>
            <person name="Roberts M."/>
            <person name="Barrow P.A."/>
            <person name="Dougan G."/>
            <person name="Parkhill J."/>
        </authorList>
    </citation>
    <scope>NUCLEOTIDE SEQUENCE [LARGE SCALE GENOMIC DNA]</scope>
    <source>
        <strain>P125109</strain>
    </source>
</reference>
<gene>
    <name evidence="1" type="primary">nagB</name>
    <name type="ordered locus">SEN0648</name>
</gene>